<organism>
    <name type="scientific">Neisseria meningitidis serogroup A / serotype 4A (strain DSM 15465 / Z2491)</name>
    <dbReference type="NCBI Taxonomy" id="122587"/>
    <lineage>
        <taxon>Bacteria</taxon>
        <taxon>Pseudomonadati</taxon>
        <taxon>Pseudomonadota</taxon>
        <taxon>Betaproteobacteria</taxon>
        <taxon>Neisseriales</taxon>
        <taxon>Neisseriaceae</taxon>
        <taxon>Neisseria</taxon>
    </lineage>
</organism>
<name>TRUB_NEIMA</name>
<reference key="1">
    <citation type="journal article" date="2000" name="Nature">
        <title>Complete DNA sequence of a serogroup A strain of Neisseria meningitidis Z2491.</title>
        <authorList>
            <person name="Parkhill J."/>
            <person name="Achtman M."/>
            <person name="James K.D."/>
            <person name="Bentley S.D."/>
            <person name="Churcher C.M."/>
            <person name="Klee S.R."/>
            <person name="Morelli G."/>
            <person name="Basham D."/>
            <person name="Brown D."/>
            <person name="Chillingworth T."/>
            <person name="Davies R.M."/>
            <person name="Davis P."/>
            <person name="Devlin K."/>
            <person name="Feltwell T."/>
            <person name="Hamlin N."/>
            <person name="Holroyd S."/>
            <person name="Jagels K."/>
            <person name="Leather S."/>
            <person name="Moule S."/>
            <person name="Mungall K.L."/>
            <person name="Quail M.A."/>
            <person name="Rajandream M.A."/>
            <person name="Rutherford K.M."/>
            <person name="Simmonds M."/>
            <person name="Skelton J."/>
            <person name="Whitehead S."/>
            <person name="Spratt B.G."/>
            <person name="Barrell B.G."/>
        </authorList>
    </citation>
    <scope>NUCLEOTIDE SEQUENCE [LARGE SCALE GENOMIC DNA]</scope>
    <source>
        <strain>DSM 15465 / Z2491</strain>
    </source>
</reference>
<gene>
    <name evidence="1" type="primary">truB</name>
    <name type="ordered locus">NMA1588</name>
</gene>
<feature type="chain" id="PRO_0000121874" description="tRNA pseudouridine synthase B">
    <location>
        <begin position="1"/>
        <end position="306"/>
    </location>
</feature>
<feature type="active site" description="Nucleophile" evidence="1">
    <location>
        <position position="47"/>
    </location>
</feature>
<sequence>MTNKPAKRPVNGVLLLDKPEGLSSNTALQKTRHLFRAEKAGHTGVLDPLATGLLPVCFGEATKFAQYLINADKAYTATLKLGEASSTGDAEGEIVATARADISLAEFQTACQALTGNIRQVPPMFSALKHEGKPLYEYARKGIVIERKARDITVYAIDIAEFDAPKAVIDVRCSKGTYIRTLSEDIAKHIGTFAHLTALRRTETAGFTIAQSHTLEALANLDETERDSLLLPCDVLVAHFPQTVLNDYAVHMLRCGQRPRFEEDLPSDTPVRVYTENGRFVGLAEYQKEICRLKALRLMNTAASAA</sequence>
<evidence type="ECO:0000255" key="1">
    <source>
        <dbReference type="HAMAP-Rule" id="MF_01080"/>
    </source>
</evidence>
<accession>Q9JTX5</accession>
<accession>A1ISH6</accession>
<keyword id="KW-0413">Isomerase</keyword>
<keyword id="KW-0819">tRNA processing</keyword>
<protein>
    <recommendedName>
        <fullName evidence="1">tRNA pseudouridine synthase B</fullName>
        <ecNumber evidence="1">5.4.99.25</ecNumber>
    </recommendedName>
    <alternativeName>
        <fullName evidence="1">tRNA pseudouridine(55) synthase</fullName>
        <shortName evidence="1">Psi55 synthase</shortName>
    </alternativeName>
    <alternativeName>
        <fullName evidence="1">tRNA pseudouridylate synthase</fullName>
    </alternativeName>
    <alternativeName>
        <fullName evidence="1">tRNA-uridine isomerase</fullName>
    </alternativeName>
</protein>
<dbReference type="EC" id="5.4.99.25" evidence="1"/>
<dbReference type="EMBL" id="AL157959">
    <property type="protein sequence ID" value="CAM08732.1"/>
    <property type="molecule type" value="Genomic_DNA"/>
</dbReference>
<dbReference type="PIR" id="G81851">
    <property type="entry name" value="G81851"/>
</dbReference>
<dbReference type="RefSeq" id="WP_002237090.1">
    <property type="nucleotide sequence ID" value="NC_003116.1"/>
</dbReference>
<dbReference type="SMR" id="Q9JTX5"/>
<dbReference type="EnsemblBacteria" id="CAM08732">
    <property type="protein sequence ID" value="CAM08732"/>
    <property type="gene ID" value="NMA1588"/>
</dbReference>
<dbReference type="GeneID" id="93387988"/>
<dbReference type="KEGG" id="nma:NMA1588"/>
<dbReference type="HOGENOM" id="CLU_032087_0_3_4"/>
<dbReference type="Proteomes" id="UP000000626">
    <property type="component" value="Chromosome"/>
</dbReference>
<dbReference type="GO" id="GO:0003723">
    <property type="term" value="F:RNA binding"/>
    <property type="evidence" value="ECO:0007669"/>
    <property type="project" value="InterPro"/>
</dbReference>
<dbReference type="GO" id="GO:0160148">
    <property type="term" value="F:tRNA pseudouridine(55) synthase activity"/>
    <property type="evidence" value="ECO:0007669"/>
    <property type="project" value="UniProtKB-EC"/>
</dbReference>
<dbReference type="GO" id="GO:1990481">
    <property type="term" value="P:mRNA pseudouridine synthesis"/>
    <property type="evidence" value="ECO:0007669"/>
    <property type="project" value="TreeGrafter"/>
</dbReference>
<dbReference type="GO" id="GO:0031119">
    <property type="term" value="P:tRNA pseudouridine synthesis"/>
    <property type="evidence" value="ECO:0007669"/>
    <property type="project" value="UniProtKB-UniRule"/>
</dbReference>
<dbReference type="CDD" id="cd02573">
    <property type="entry name" value="PseudoU_synth_EcTruB"/>
    <property type="match status" value="1"/>
</dbReference>
<dbReference type="CDD" id="cd21152">
    <property type="entry name" value="PUA_TruB_bacterial"/>
    <property type="match status" value="1"/>
</dbReference>
<dbReference type="FunFam" id="3.30.2350.10:FF:000011">
    <property type="entry name" value="tRNA pseudouridine synthase B"/>
    <property type="match status" value="1"/>
</dbReference>
<dbReference type="Gene3D" id="3.30.2350.10">
    <property type="entry name" value="Pseudouridine synthase"/>
    <property type="match status" value="1"/>
</dbReference>
<dbReference type="Gene3D" id="2.30.130.10">
    <property type="entry name" value="PUA domain"/>
    <property type="match status" value="1"/>
</dbReference>
<dbReference type="HAMAP" id="MF_01080">
    <property type="entry name" value="TruB_bact"/>
    <property type="match status" value="1"/>
</dbReference>
<dbReference type="InterPro" id="IPR020103">
    <property type="entry name" value="PsdUridine_synth_cat_dom_sf"/>
</dbReference>
<dbReference type="InterPro" id="IPR002501">
    <property type="entry name" value="PsdUridine_synth_N"/>
</dbReference>
<dbReference type="InterPro" id="IPR015947">
    <property type="entry name" value="PUA-like_sf"/>
</dbReference>
<dbReference type="InterPro" id="IPR036974">
    <property type="entry name" value="PUA_sf"/>
</dbReference>
<dbReference type="InterPro" id="IPR014780">
    <property type="entry name" value="tRNA_psdUridine_synth_TruB"/>
</dbReference>
<dbReference type="InterPro" id="IPR015240">
    <property type="entry name" value="tRNA_sdUridine_synth_fam1_C"/>
</dbReference>
<dbReference type="InterPro" id="IPR032819">
    <property type="entry name" value="TruB_C"/>
</dbReference>
<dbReference type="NCBIfam" id="TIGR00431">
    <property type="entry name" value="TruB"/>
    <property type="match status" value="1"/>
</dbReference>
<dbReference type="PANTHER" id="PTHR13767:SF2">
    <property type="entry name" value="PSEUDOURIDYLATE SYNTHASE TRUB1"/>
    <property type="match status" value="1"/>
</dbReference>
<dbReference type="PANTHER" id="PTHR13767">
    <property type="entry name" value="TRNA-PSEUDOURIDINE SYNTHASE"/>
    <property type="match status" value="1"/>
</dbReference>
<dbReference type="Pfam" id="PF09157">
    <property type="entry name" value="TruB-C_2"/>
    <property type="match status" value="1"/>
</dbReference>
<dbReference type="Pfam" id="PF16198">
    <property type="entry name" value="TruB_C_2"/>
    <property type="match status" value="1"/>
</dbReference>
<dbReference type="Pfam" id="PF01509">
    <property type="entry name" value="TruB_N"/>
    <property type="match status" value="1"/>
</dbReference>
<dbReference type="SUPFAM" id="SSF55120">
    <property type="entry name" value="Pseudouridine synthase"/>
    <property type="match status" value="1"/>
</dbReference>
<dbReference type="SUPFAM" id="SSF88697">
    <property type="entry name" value="PUA domain-like"/>
    <property type="match status" value="1"/>
</dbReference>
<comment type="function">
    <text evidence="1">Responsible for synthesis of pseudouridine from uracil-55 in the psi GC loop of transfer RNAs.</text>
</comment>
<comment type="catalytic activity">
    <reaction evidence="1">
        <text>uridine(55) in tRNA = pseudouridine(55) in tRNA</text>
        <dbReference type="Rhea" id="RHEA:42532"/>
        <dbReference type="Rhea" id="RHEA-COMP:10101"/>
        <dbReference type="Rhea" id="RHEA-COMP:10102"/>
        <dbReference type="ChEBI" id="CHEBI:65314"/>
        <dbReference type="ChEBI" id="CHEBI:65315"/>
        <dbReference type="EC" id="5.4.99.25"/>
    </reaction>
</comment>
<comment type="similarity">
    <text evidence="1">Belongs to the pseudouridine synthase TruB family. Type 1 subfamily.</text>
</comment>
<proteinExistence type="inferred from homology"/>